<proteinExistence type="inferred from homology"/>
<organism>
    <name type="scientific">Schizosaccharomyces pombe (strain 972 / ATCC 24843)</name>
    <name type="common">Fission yeast</name>
    <dbReference type="NCBI Taxonomy" id="284812"/>
    <lineage>
        <taxon>Eukaryota</taxon>
        <taxon>Fungi</taxon>
        <taxon>Dikarya</taxon>
        <taxon>Ascomycota</taxon>
        <taxon>Taphrinomycotina</taxon>
        <taxon>Schizosaccharomycetes</taxon>
        <taxon>Schizosaccharomycetales</taxon>
        <taxon>Schizosaccharomycetaceae</taxon>
        <taxon>Schizosaccharomyces</taxon>
    </lineage>
</organism>
<reference key="1">
    <citation type="journal article" date="2002" name="Nature">
        <title>The genome sequence of Schizosaccharomyces pombe.</title>
        <authorList>
            <person name="Wood V."/>
            <person name="Gwilliam R."/>
            <person name="Rajandream M.A."/>
            <person name="Lyne M.H."/>
            <person name="Lyne R."/>
            <person name="Stewart A."/>
            <person name="Sgouros J.G."/>
            <person name="Peat N."/>
            <person name="Hayles J."/>
            <person name="Baker S.G."/>
            <person name="Basham D."/>
            <person name="Bowman S."/>
            <person name="Brooks K."/>
            <person name="Brown D."/>
            <person name="Brown S."/>
            <person name="Chillingworth T."/>
            <person name="Churcher C.M."/>
            <person name="Collins M."/>
            <person name="Connor R."/>
            <person name="Cronin A."/>
            <person name="Davis P."/>
            <person name="Feltwell T."/>
            <person name="Fraser A."/>
            <person name="Gentles S."/>
            <person name="Goble A."/>
            <person name="Hamlin N."/>
            <person name="Harris D.E."/>
            <person name="Hidalgo J."/>
            <person name="Hodgson G."/>
            <person name="Holroyd S."/>
            <person name="Hornsby T."/>
            <person name="Howarth S."/>
            <person name="Huckle E.J."/>
            <person name="Hunt S."/>
            <person name="Jagels K."/>
            <person name="James K.D."/>
            <person name="Jones L."/>
            <person name="Jones M."/>
            <person name="Leather S."/>
            <person name="McDonald S."/>
            <person name="McLean J."/>
            <person name="Mooney P."/>
            <person name="Moule S."/>
            <person name="Mungall K.L."/>
            <person name="Murphy L.D."/>
            <person name="Niblett D."/>
            <person name="Odell C."/>
            <person name="Oliver K."/>
            <person name="O'Neil S."/>
            <person name="Pearson D."/>
            <person name="Quail M.A."/>
            <person name="Rabbinowitsch E."/>
            <person name="Rutherford K.M."/>
            <person name="Rutter S."/>
            <person name="Saunders D."/>
            <person name="Seeger K."/>
            <person name="Sharp S."/>
            <person name="Skelton J."/>
            <person name="Simmonds M.N."/>
            <person name="Squares R."/>
            <person name="Squares S."/>
            <person name="Stevens K."/>
            <person name="Taylor K."/>
            <person name="Taylor R.G."/>
            <person name="Tivey A."/>
            <person name="Walsh S.V."/>
            <person name="Warren T."/>
            <person name="Whitehead S."/>
            <person name="Woodward J.R."/>
            <person name="Volckaert G."/>
            <person name="Aert R."/>
            <person name="Robben J."/>
            <person name="Grymonprez B."/>
            <person name="Weltjens I."/>
            <person name="Vanstreels E."/>
            <person name="Rieger M."/>
            <person name="Schaefer M."/>
            <person name="Mueller-Auer S."/>
            <person name="Gabel C."/>
            <person name="Fuchs M."/>
            <person name="Duesterhoeft A."/>
            <person name="Fritzc C."/>
            <person name="Holzer E."/>
            <person name="Moestl D."/>
            <person name="Hilbert H."/>
            <person name="Borzym K."/>
            <person name="Langer I."/>
            <person name="Beck A."/>
            <person name="Lehrach H."/>
            <person name="Reinhardt R."/>
            <person name="Pohl T.M."/>
            <person name="Eger P."/>
            <person name="Zimmermann W."/>
            <person name="Wedler H."/>
            <person name="Wambutt R."/>
            <person name="Purnelle B."/>
            <person name="Goffeau A."/>
            <person name="Cadieu E."/>
            <person name="Dreano S."/>
            <person name="Gloux S."/>
            <person name="Lelaure V."/>
            <person name="Mottier S."/>
            <person name="Galibert F."/>
            <person name="Aves S.J."/>
            <person name="Xiang Z."/>
            <person name="Hunt C."/>
            <person name="Moore K."/>
            <person name="Hurst S.M."/>
            <person name="Lucas M."/>
            <person name="Rochet M."/>
            <person name="Gaillardin C."/>
            <person name="Tallada V.A."/>
            <person name="Garzon A."/>
            <person name="Thode G."/>
            <person name="Daga R.R."/>
            <person name="Cruzado L."/>
            <person name="Jimenez J."/>
            <person name="Sanchez M."/>
            <person name="del Rey F."/>
            <person name="Benito J."/>
            <person name="Dominguez A."/>
            <person name="Revuelta J.L."/>
            <person name="Moreno S."/>
            <person name="Armstrong J."/>
            <person name="Forsburg S.L."/>
            <person name="Cerutti L."/>
            <person name="Lowe T."/>
            <person name="McCombie W.R."/>
            <person name="Paulsen I."/>
            <person name="Potashkin J."/>
            <person name="Shpakovski G.V."/>
            <person name="Ussery D."/>
            <person name="Barrell B.G."/>
            <person name="Nurse P."/>
        </authorList>
    </citation>
    <scope>NUCLEOTIDE SEQUENCE [LARGE SCALE GENOMIC DNA]</scope>
    <source>
        <strain>972 / ATCC 24843</strain>
    </source>
</reference>
<name>HSP78_SCHPO</name>
<keyword id="KW-0067">ATP-binding</keyword>
<keyword id="KW-0143">Chaperone</keyword>
<keyword id="KW-0175">Coiled coil</keyword>
<keyword id="KW-0496">Mitochondrion</keyword>
<keyword id="KW-0547">Nucleotide-binding</keyword>
<keyword id="KW-1185">Reference proteome</keyword>
<keyword id="KW-0677">Repeat</keyword>
<keyword id="KW-0346">Stress response</keyword>
<keyword id="KW-0809">Transit peptide</keyword>
<evidence type="ECO:0000250" key="1"/>
<evidence type="ECO:0000255" key="2"/>
<evidence type="ECO:0000305" key="3"/>
<feature type="transit peptide" description="Mitochondrion" evidence="2">
    <location>
        <begin position="1"/>
        <end position="36"/>
    </location>
</feature>
<feature type="chain" id="PRO_0000372309" description="Heat shock protein 78, mitochondrial">
    <location>
        <begin position="37"/>
        <end position="803"/>
    </location>
</feature>
<feature type="region of interest" description="NBD1" evidence="1">
    <location>
        <begin position="94"/>
        <end position="342"/>
    </location>
</feature>
<feature type="region of interest" description="NBD2" evidence="1">
    <location>
        <begin position="465"/>
        <end position="656"/>
    </location>
</feature>
<feature type="coiled-coil region" evidence="2">
    <location>
        <begin position="343"/>
        <end position="431"/>
    </location>
</feature>
<feature type="binding site" evidence="2">
    <location>
        <begin position="139"/>
        <end position="146"/>
    </location>
    <ligand>
        <name>ATP</name>
        <dbReference type="ChEBI" id="CHEBI:30616"/>
        <label>1</label>
    </ligand>
</feature>
<feature type="binding site" evidence="2">
    <location>
        <begin position="539"/>
        <end position="546"/>
    </location>
    <ligand>
        <name>ATP</name>
        <dbReference type="ChEBI" id="CHEBI:30616"/>
        <label>1</label>
    </ligand>
</feature>
<comment type="function">
    <text evidence="1">Required, in concert with mitochondrial Hsp70, for the dissociation, resolubilization and refolding of aggregates of damaged proteins in the mitochondrial matrix after heat stress. May extract proteins from aggregates by unfolding and threading them in an ATP-dependent process through the axial channel of the protein hexamer, after which they can be refolded by the Hsp70 chaperone system. Required for resumption of mitochondrial respiratory function, DNA synthesis and morphology after heat stress (By similarity).</text>
</comment>
<comment type="subunit">
    <text evidence="1">Homohexamer, forming a ring with a central pore.</text>
</comment>
<comment type="subcellular location">
    <subcellularLocation>
        <location evidence="1">Mitochondrion matrix</location>
    </subcellularLocation>
</comment>
<comment type="domain">
    <text evidence="1">Has 2 AAA ATPase type nucleotide-binding domains (NBDs) per monomer. NBD1 is primarily responsible for ATP hydrolysis. NBD2 is crucial for oligomerization (By similarity).</text>
</comment>
<comment type="similarity">
    <text evidence="3">Belongs to the ClpA/ClpB family.</text>
</comment>
<gene>
    <name type="primary">hsp78</name>
    <name type="ORF">SPBC4F6.17c</name>
</gene>
<protein>
    <recommendedName>
        <fullName>Heat shock protein 78, mitochondrial</fullName>
    </recommendedName>
</protein>
<sequence length="803" mass="90154">MNILPKSIPIRIQSLRRYQGSLKTSLRALSTRPIFEKRLLAETPFSIRPSNASVLIAKRSPKFGWKQVRFYAANPNGGNFRMDLGGGRKQGAALEEYGTDLTALAKQGKLDPVIGREEEIQRTIQILSRRTKNNPALVGPAGVGKTAIMEGLASRIIRGEVPESMKDKRVIVLDLGALISGAKFRGDFEERLKSVLSDLEGAEGKVILFVDEMHLLLGFGKAEGSIDASNLLKPALARGKLHCCGATTLEEYRKYIEKDAALARRFQAVMVNEPSVADTISILRGLKERYEVHHGVRITDDALVTAATYSARYITDRFLPDKAIDLVDEACSSLRLQQESKPDELRRLDRQIMTIQIELESLRKETDTTSVERREKLESKLTDLKEEQDKLSAAWEEERKLLDSIKKAKTELEQARIELERTQREGNYARASELQYAIIPELERSVPKEEKTLEEKKPSMVHDSVTSDDIAVVVSRATGIPTTNLMRGERDKLLNMEQTIGKKIIGQDEALKAIADAVRLSRAGLQNTNRPLASFLFLGPTGVGKTALTKALAEFLFDTDKAMIRFDMSEFQEKHTIARLIGSPPGYIGYEESGELTEAVRRKPYAVLLFDELEKAHHDITNLLLQVLDEGFLTDSQGRKVDFRSTLIVMTSNLGSDILVADPSTTVTPKSRDAVMDVVQKYYPPEFLNRIDDQIVFNKLSEKNLEDIVNVRLDEVQQRLNDRRIILTVTEAARKWLAEKGYSPAYGARPLNRLIQKRILNTMAMKIIQGEIKSDENVVIDVLDGELEFKANKLEPQSTSHED</sequence>
<accession>O74402</accession>
<dbReference type="EMBL" id="CU329671">
    <property type="protein sequence ID" value="CAA20737.1"/>
    <property type="molecule type" value="Genomic_DNA"/>
</dbReference>
<dbReference type="PIR" id="T40514">
    <property type="entry name" value="T40514"/>
</dbReference>
<dbReference type="RefSeq" id="NP_596117.1">
    <property type="nucleotide sequence ID" value="NM_001022034.2"/>
</dbReference>
<dbReference type="SMR" id="O74402"/>
<dbReference type="BioGRID" id="277414">
    <property type="interactions" value="2"/>
</dbReference>
<dbReference type="FunCoup" id="O74402">
    <property type="interactions" value="124"/>
</dbReference>
<dbReference type="STRING" id="284812.O74402"/>
<dbReference type="iPTMnet" id="O74402"/>
<dbReference type="PaxDb" id="4896-SPBC4F6.17c.1"/>
<dbReference type="EnsemblFungi" id="SPBC4F6.17c.1">
    <property type="protein sequence ID" value="SPBC4F6.17c.1:pep"/>
    <property type="gene ID" value="SPBC4F6.17c"/>
</dbReference>
<dbReference type="GeneID" id="2540898"/>
<dbReference type="KEGG" id="spo:2540898"/>
<dbReference type="PomBase" id="SPBC4F6.17c">
    <property type="gene designation" value="hsp78"/>
</dbReference>
<dbReference type="VEuPathDB" id="FungiDB:SPBC4F6.17c"/>
<dbReference type="eggNOG" id="KOG1051">
    <property type="taxonomic scope" value="Eukaryota"/>
</dbReference>
<dbReference type="HOGENOM" id="CLU_005070_4_0_1"/>
<dbReference type="InParanoid" id="O74402"/>
<dbReference type="OMA" id="VSKMMQG"/>
<dbReference type="PhylomeDB" id="O74402"/>
<dbReference type="PRO" id="PR:O74402"/>
<dbReference type="Proteomes" id="UP000002485">
    <property type="component" value="Chromosome II"/>
</dbReference>
<dbReference type="GO" id="GO:0005737">
    <property type="term" value="C:cytoplasm"/>
    <property type="evidence" value="ECO:0000318"/>
    <property type="project" value="GO_Central"/>
</dbReference>
<dbReference type="GO" id="GO:0005759">
    <property type="term" value="C:mitochondrial matrix"/>
    <property type="evidence" value="ECO:0000318"/>
    <property type="project" value="GO_Central"/>
</dbReference>
<dbReference type="GO" id="GO:0005524">
    <property type="term" value="F:ATP binding"/>
    <property type="evidence" value="ECO:0000255"/>
    <property type="project" value="PomBase"/>
</dbReference>
<dbReference type="GO" id="GO:0016887">
    <property type="term" value="F:ATP hydrolysis activity"/>
    <property type="evidence" value="ECO:0000318"/>
    <property type="project" value="GO_Central"/>
</dbReference>
<dbReference type="GO" id="GO:0051082">
    <property type="term" value="F:unfolded protein binding"/>
    <property type="evidence" value="ECO:0000250"/>
    <property type="project" value="PomBase"/>
</dbReference>
<dbReference type="GO" id="GO:0034605">
    <property type="term" value="P:cellular response to heat"/>
    <property type="evidence" value="ECO:0000318"/>
    <property type="project" value="GO_Central"/>
</dbReference>
<dbReference type="GO" id="GO:0042026">
    <property type="term" value="P:protein refolding"/>
    <property type="evidence" value="ECO:0000318"/>
    <property type="project" value="GO_Central"/>
</dbReference>
<dbReference type="GO" id="GO:0043335">
    <property type="term" value="P:protein unfolding"/>
    <property type="evidence" value="ECO:0000318"/>
    <property type="project" value="GO_Central"/>
</dbReference>
<dbReference type="CDD" id="cd00009">
    <property type="entry name" value="AAA"/>
    <property type="match status" value="1"/>
</dbReference>
<dbReference type="CDD" id="cd19499">
    <property type="entry name" value="RecA-like_ClpB_Hsp104-like"/>
    <property type="match status" value="1"/>
</dbReference>
<dbReference type="FunFam" id="1.10.8.60:FF:000017">
    <property type="entry name" value="ATP-dependent chaperone ClpB"/>
    <property type="match status" value="1"/>
</dbReference>
<dbReference type="FunFam" id="3.40.50.300:FF:000120">
    <property type="entry name" value="ATP-dependent chaperone ClpB"/>
    <property type="match status" value="1"/>
</dbReference>
<dbReference type="FunFam" id="3.40.50.300:FF:000025">
    <property type="entry name" value="ATP-dependent Clp protease subunit"/>
    <property type="match status" value="1"/>
</dbReference>
<dbReference type="FunFam" id="3.40.50.300:FF:000010">
    <property type="entry name" value="Chaperone clpB 1, putative"/>
    <property type="match status" value="1"/>
</dbReference>
<dbReference type="Gene3D" id="1.10.8.60">
    <property type="match status" value="1"/>
</dbReference>
<dbReference type="Gene3D" id="3.40.50.300">
    <property type="entry name" value="P-loop containing nucleotide triphosphate hydrolases"/>
    <property type="match status" value="3"/>
</dbReference>
<dbReference type="InterPro" id="IPR003593">
    <property type="entry name" value="AAA+_ATPase"/>
</dbReference>
<dbReference type="InterPro" id="IPR003959">
    <property type="entry name" value="ATPase_AAA_core"/>
</dbReference>
<dbReference type="InterPro" id="IPR019489">
    <property type="entry name" value="Clp_ATPase_C"/>
</dbReference>
<dbReference type="InterPro" id="IPR001270">
    <property type="entry name" value="ClpA/B"/>
</dbReference>
<dbReference type="InterPro" id="IPR018368">
    <property type="entry name" value="ClpA/B_CS1"/>
</dbReference>
<dbReference type="InterPro" id="IPR028299">
    <property type="entry name" value="ClpA/B_CS2"/>
</dbReference>
<dbReference type="InterPro" id="IPR041546">
    <property type="entry name" value="ClpA/ClpB_AAA_lid"/>
</dbReference>
<dbReference type="InterPro" id="IPR050130">
    <property type="entry name" value="ClpA_ClpB"/>
</dbReference>
<dbReference type="InterPro" id="IPR027417">
    <property type="entry name" value="P-loop_NTPase"/>
</dbReference>
<dbReference type="PANTHER" id="PTHR11638">
    <property type="entry name" value="ATP-DEPENDENT CLP PROTEASE"/>
    <property type="match status" value="1"/>
</dbReference>
<dbReference type="PANTHER" id="PTHR11638:SF176">
    <property type="entry name" value="HEAT SHOCK PROTEIN 78, MITOCHONDRIAL"/>
    <property type="match status" value="1"/>
</dbReference>
<dbReference type="Pfam" id="PF00004">
    <property type="entry name" value="AAA"/>
    <property type="match status" value="1"/>
</dbReference>
<dbReference type="Pfam" id="PF07724">
    <property type="entry name" value="AAA_2"/>
    <property type="match status" value="1"/>
</dbReference>
<dbReference type="Pfam" id="PF17871">
    <property type="entry name" value="AAA_lid_9"/>
    <property type="match status" value="1"/>
</dbReference>
<dbReference type="Pfam" id="PF10431">
    <property type="entry name" value="ClpB_D2-small"/>
    <property type="match status" value="1"/>
</dbReference>
<dbReference type="PRINTS" id="PR00300">
    <property type="entry name" value="CLPPROTEASEA"/>
</dbReference>
<dbReference type="SMART" id="SM00382">
    <property type="entry name" value="AAA"/>
    <property type="match status" value="2"/>
</dbReference>
<dbReference type="SMART" id="SM01086">
    <property type="entry name" value="ClpB_D2-small"/>
    <property type="match status" value="1"/>
</dbReference>
<dbReference type="SUPFAM" id="SSF52540">
    <property type="entry name" value="P-loop containing nucleoside triphosphate hydrolases"/>
    <property type="match status" value="2"/>
</dbReference>
<dbReference type="PROSITE" id="PS00870">
    <property type="entry name" value="CLPAB_1"/>
    <property type="match status" value="1"/>
</dbReference>
<dbReference type="PROSITE" id="PS00871">
    <property type="entry name" value="CLPAB_2"/>
    <property type="match status" value="1"/>
</dbReference>